<name>S1FA_SPIOL</name>
<dbReference type="EMBL" id="X79543">
    <property type="protein sequence ID" value="CAA56077.1"/>
    <property type="molecule type" value="mRNA"/>
</dbReference>
<dbReference type="PIR" id="S54730">
    <property type="entry name" value="S47063"/>
</dbReference>
<dbReference type="SMR" id="P42552"/>
<dbReference type="Proteomes" id="UP001155700">
    <property type="component" value="Unplaced"/>
</dbReference>
<dbReference type="GO" id="GO:0005634">
    <property type="term" value="C:nucleus"/>
    <property type="evidence" value="ECO:0007669"/>
    <property type="project" value="UniProtKB-SubCell"/>
</dbReference>
<dbReference type="GO" id="GO:0003677">
    <property type="term" value="F:DNA binding"/>
    <property type="evidence" value="ECO:0007669"/>
    <property type="project" value="UniProtKB-KW"/>
</dbReference>
<dbReference type="GO" id="GO:0006355">
    <property type="term" value="P:regulation of DNA-templated transcription"/>
    <property type="evidence" value="ECO:0007669"/>
    <property type="project" value="InterPro"/>
</dbReference>
<dbReference type="InterPro" id="IPR006779">
    <property type="entry name" value="S1FA_DNA-bd"/>
</dbReference>
<dbReference type="PANTHER" id="PTHR35298">
    <property type="entry name" value="DNA-BINDING PROTEIN S1FA2"/>
    <property type="match status" value="1"/>
</dbReference>
<dbReference type="PANTHER" id="PTHR35298:SF5">
    <property type="entry name" value="DNA-BINDING PROTEIN S1FA3"/>
    <property type="match status" value="1"/>
</dbReference>
<dbReference type="Pfam" id="PF04689">
    <property type="entry name" value="S1FA"/>
    <property type="match status" value="1"/>
</dbReference>
<sequence>MAVNEVEAKGLNPGLIVLLVIGGLLLTFLVGNFILYTYAQKNLPPKKKKPISKKKMKRERLKQGVAPPGE</sequence>
<gene>
    <name type="primary">S1FA</name>
</gene>
<organism>
    <name type="scientific">Spinacia oleracea</name>
    <name type="common">Spinach</name>
    <dbReference type="NCBI Taxonomy" id="3562"/>
    <lineage>
        <taxon>Eukaryota</taxon>
        <taxon>Viridiplantae</taxon>
        <taxon>Streptophyta</taxon>
        <taxon>Embryophyta</taxon>
        <taxon>Tracheophyta</taxon>
        <taxon>Spermatophyta</taxon>
        <taxon>Magnoliopsida</taxon>
        <taxon>eudicotyledons</taxon>
        <taxon>Gunneridae</taxon>
        <taxon>Pentapetalae</taxon>
        <taxon>Caryophyllales</taxon>
        <taxon>Chenopodiaceae</taxon>
        <taxon>Chenopodioideae</taxon>
        <taxon>Anserineae</taxon>
        <taxon>Spinacia</taxon>
    </lineage>
</organism>
<evidence type="ECO:0000255" key="1"/>
<evidence type="ECO:0000256" key="2">
    <source>
        <dbReference type="SAM" id="MobiDB-lite"/>
    </source>
</evidence>
<evidence type="ECO:0000305" key="3"/>
<feature type="chain" id="PRO_0000132719" description="DNA-binding protein S1FA">
    <location>
        <begin position="1"/>
        <end position="70"/>
    </location>
</feature>
<feature type="region of interest" description="Disordered" evidence="2">
    <location>
        <begin position="44"/>
        <end position="70"/>
    </location>
</feature>
<feature type="short sequence motif" description="Nuclear localization signal" evidence="1">
    <location>
        <begin position="44"/>
        <end position="49"/>
    </location>
</feature>
<feature type="compositionally biased region" description="Basic residues" evidence="2">
    <location>
        <begin position="44"/>
        <end position="60"/>
    </location>
</feature>
<accession>P42552</accession>
<comment type="function">
    <text>DNA-binding protein that specifically recognizes a negative element (S1F) within the RPS1 promoter.</text>
</comment>
<comment type="subcellular location">
    <subcellularLocation>
        <location evidence="3">Nucleus</location>
    </subcellularLocation>
</comment>
<comment type="similarity">
    <text evidence="3">Belongs to the S1FA transcription factor family.</text>
</comment>
<keyword id="KW-0238">DNA-binding</keyword>
<keyword id="KW-0539">Nucleus</keyword>
<keyword id="KW-1185">Reference proteome</keyword>
<keyword id="KW-0678">Repressor</keyword>
<keyword id="KW-0804">Transcription</keyword>
<keyword id="KW-0805">Transcription regulation</keyword>
<proteinExistence type="inferred from homology"/>
<protein>
    <recommendedName>
        <fullName>DNA-binding protein S1FA</fullName>
    </recommendedName>
</protein>
<reference key="1">
    <citation type="journal article" date="1995" name="Nucleic Acids Res.">
        <title>Molecular cloning of a small DNA binding protein with specificity for a tissue-specific negative element within the rps1 promoter.</title>
        <authorList>
            <person name="Zhou D.-X."/>
            <person name="Bisanz-Seyer C."/>
            <person name="Mache R."/>
        </authorList>
    </citation>
    <scope>NUCLEOTIDE SEQUENCE [MRNA]</scope>
</reference>